<evidence type="ECO:0000250" key="1"/>
<evidence type="ECO:0000250" key="2">
    <source>
        <dbReference type="UniProtKB" id="P08799"/>
    </source>
</evidence>
<evidence type="ECO:0000250" key="3">
    <source>
        <dbReference type="UniProtKB" id="Q9V3Z6"/>
    </source>
</evidence>
<evidence type="ECO:0000255" key="4"/>
<evidence type="ECO:0000255" key="5">
    <source>
        <dbReference type="PROSITE-ProRule" id="PRU00084"/>
    </source>
</evidence>
<evidence type="ECO:0000255" key="6">
    <source>
        <dbReference type="PROSITE-ProRule" id="PRU00116"/>
    </source>
</evidence>
<evidence type="ECO:0000255" key="7">
    <source>
        <dbReference type="PROSITE-ProRule" id="PRU00192"/>
    </source>
</evidence>
<evidence type="ECO:0000255" key="8">
    <source>
        <dbReference type="PROSITE-ProRule" id="PRU00359"/>
    </source>
</evidence>
<evidence type="ECO:0000255" key="9">
    <source>
        <dbReference type="PROSITE-ProRule" id="PRU00782"/>
    </source>
</evidence>
<evidence type="ECO:0000256" key="10">
    <source>
        <dbReference type="SAM" id="MobiDB-lite"/>
    </source>
</evidence>
<evidence type="ECO:0000305" key="11"/>
<evidence type="ECO:0000312" key="12">
    <source>
        <dbReference type="EMBL" id="EAT47711.1"/>
    </source>
</evidence>
<proteinExistence type="inferred from homology"/>
<comment type="function">
    <text evidence="1">Myosins are actin-based motor molecules with ATPase activity. Unconventional myosins serve in intracellular movements: can function in cells as a single-molecule cargo transporter. A very slow and high-duty-ratio motor, may be suitable for tension maintenance of actin filaments. Their highly divergent tails are presumed to bind to membranous compartments, which would be moved relative to actin filaments. Plays a key role in the formation of cellular projections and other actin-based functions required for embryonic and larval viability. Necessary for auditory transduction: plays a role in Johnston organ (JO) organization by functioning in scolopidial apical attachment and therefore to acoustic stimulus propagation from the antenna a2/a3 joint to transducing elements (By similarity).</text>
</comment>
<comment type="subunit">
    <text evidence="3">Homodimerizes in a two headed molecule through the formation of a coiled-coil rod.</text>
</comment>
<comment type="subcellular location">
    <subcellularLocation>
        <location evidence="3">Cytoplasm</location>
    </subcellularLocation>
</comment>
<comment type="similarity">
    <text evidence="11">Belongs to the TRAFAC class myosin-kinesin ATPase superfamily. Myosin family.</text>
</comment>
<feature type="chain" id="PRO_0000306375" description="Myosin-VIIa">
    <location>
        <begin position="1"/>
        <end position="2163"/>
    </location>
</feature>
<feature type="domain" description="Myosin motor" evidence="9">
    <location>
        <begin position="58"/>
        <end position="728"/>
    </location>
</feature>
<feature type="domain" description="IQ 1" evidence="6 11">
    <location>
        <begin position="731"/>
        <end position="753"/>
    </location>
</feature>
<feature type="domain" description="IQ 2" evidence="6">
    <location>
        <begin position="754"/>
        <end position="783"/>
    </location>
</feature>
<feature type="domain" description="IQ 3" evidence="6 11">
    <location>
        <begin position="800"/>
        <end position="822"/>
    </location>
</feature>
<feature type="domain" description="IQ 4" evidence="6">
    <location>
        <begin position="823"/>
        <end position="852"/>
    </location>
</feature>
<feature type="domain" description="MyTH4 1" evidence="8">
    <location>
        <begin position="1003"/>
        <end position="1239"/>
    </location>
</feature>
<feature type="domain" description="FERM 1" evidence="5">
    <location>
        <begin position="1244"/>
        <end position="1554"/>
    </location>
</feature>
<feature type="domain" description="SH3" evidence="7">
    <location>
        <begin position="1552"/>
        <end position="1621"/>
    </location>
</feature>
<feature type="domain" description="MyTH4 2" evidence="8">
    <location>
        <begin position="1697"/>
        <end position="1845"/>
    </location>
</feature>
<feature type="domain" description="FERM 2" evidence="5">
    <location>
        <begin position="1851"/>
        <end position="2154"/>
    </location>
</feature>
<feature type="region of interest" description="Actin-binding" evidence="2">
    <location>
        <begin position="607"/>
        <end position="629"/>
    </location>
</feature>
<feature type="region of interest" description="Actin-binding" evidence="2">
    <location>
        <begin position="707"/>
        <end position="721"/>
    </location>
</feature>
<feature type="region of interest" description="Disordered" evidence="10">
    <location>
        <begin position="937"/>
        <end position="958"/>
    </location>
</feature>
<feature type="coiled-coil region" evidence="4">
    <location>
        <begin position="886"/>
        <end position="914"/>
    </location>
</feature>
<feature type="binding site" evidence="2">
    <location>
        <begin position="151"/>
        <end position="158"/>
    </location>
    <ligand>
        <name>ATP</name>
        <dbReference type="ChEBI" id="CHEBI:30616"/>
    </ligand>
</feature>
<protein>
    <recommendedName>
        <fullName>Myosin-VIIa</fullName>
    </recommendedName>
    <alternativeName>
        <fullName>Protein crinkled</fullName>
    </alternativeName>
</protein>
<gene>
    <name evidence="3" type="primary">ck</name>
    <name type="ORF">AAEL001220</name>
</gene>
<name>MYO7A_AEDAE</name>
<sequence length="2163" mass="250159">MGDYIWIEPVSGREFDVAIGARVISAEGRRIQVRDDDGNELWLTPERRIKAMHASSVQGVEDMISLGDLHEAGILRNLLIRYNDNLIYTYTGSILVAVNPYQILPIYTADQIKLYKERKIGELPPHIFAIGDNSYANMRRYGQDQCIVISGESGAGKTESTKLILQYLAAISGKHSWIEQQILEANPILEAFGNAKTVRNDNSSRFGKYIDIHFNNSGVIEGAEIEQYLLEKSRIVSQNAEERNYHIFYCLLAGLSSDEKRKLNLGYASDYRYLTGGGCIKCDGRNDAAEFADIRSAMKVLCFSDHEIWEILKLLAALLHTGNITYRATVIDNLDATEIPEHINVERVANLLEVPFQPFIDALTRKTLFAHGETVVSTLSRDQSMDVRDAFVKGIYGRLFVLIVKKINSAIYKPKSSTRSAIGVLDIFGFENFKHNSFEQFCINFANENLQQFFVRHIFKLEQEEYNHESINWQHIEFVDNQDALDLIAIKQLNIMALIDEESKFPKGTDQTMLAKLHKTHGTHRNYLKPKSDINTSFGLNHFAGVVFYDTRGFLEKNRDTFSADLLQLISSSTNRFLQMVFAEDIGMGAETRKRTPTLSTQFKKSLDSLMKTLSSCQPFFIRCIKPNELKKPMMFDRALCCRQLRYSGMMETIRIRRAGYPIRHKFKDFVERYRFLISGIPPAHRTDCRLATSKICASVLGRSDYQLGHTKVFLKDAHDLFLEQERDRVLTRKILILQRSIRGWVYRRRFLRMRQAAVTIQKFWKGYAQRQRYKKMKIGYMRLQALIRSRVLSHRFRHLRGHIVRLQARIRGYLVRREYGLKMWAVIKIQSHVRRMIAMNRYQKLKLEYRRHHEALRLRRMEEEELKHQGNKRAKEIAEQHYRDRLNEIERKEIEQELEERRRVEVKKNIINDAARKADEPVDDSKLVEAMFDFLPDSSSEAPTPHGGRETSVFNDLPVNQDNHEDIIGPIHTISEDEEDLSEFKFQKFAATYFQGNITHFYSRKPLKHPLLPLHTQGDQLAAQALWITILRFTGDLPEPRYHTMDRDNTSVMSKVTATLGRNFIRSKEFQEAQMMGLDPEAFLKQKPRSIRHKLVSLTLKRKNKLGEDVRRRLQDEEYTADSYQSWLESRPTSNLEKLHFIIGHGILRAELRDEIYCQICKQLTNNPSKSSHARGWILLSLCVGCFAPSEKFVNYLRSFIREGPPGYAPYCEERLKRTFNNGTRNQPPSWLELQATKSKKPIMLPITFMDGNTKTLLADSATTARELCNQLSDKIALKDQFGFSLYIALFDKVSSLGSGGDHVMDAISQCEQYAKEQGAQERNAPWRLFFRKEIFAPWHNPIEDQVATNLIYQQVVRGVKFGEYRCDKEEDLAMIAAQQYYIEYNTDMSMDRLYTLLPNFIPDYCLTGIEKAIDRWAALVLQAYKKSYYLKDKAAALKVKEDVVSYAKYKWPLLFSRFYEAYRNSGPNLPKNDVIIAVNWTGVYVVDDQEQVLLELSFPEITAVSSQKTNKVFTQTFSLSTVRNEEFTFQSPNAEDIRDLVVYFLEGLKKRSKFVIALQDYKAPGEGTSFLSFLKGDLIILEDESTGESVLNSGWCIGCCERTQERGDFPAEIVYVLPSLTKPPPDILALFSVEDAHHGKRLNSIHSNGGTETREHPHTLADYSLDHFRPPPKRTMSKALSTLSSKRGGDELWRYSREPLKQPLLKKLLAKEELAEEACLAFIAIMKYMGDLPSKRPRIGNEITDHIFDGPLKHEILRDEIYCQLMKQLTDNRNRMSEERGWELMWLSTGLFACSQQLLKELTVFLRTRRHPISQDSLHRLQKTIRNGQRKYPPHQVEVEAIQHKTTQIFHKVYFPDDTDEAFEVDSSTRAKDFCQNISQRLNLRSSEGFSLFVKIADKVISVPEGDFFFDFVRHLTDWIKKARPTRDGTNPQFTYQVFFMKKLWTNTVPGKDKNADLIFHYHQELPKLLRGYHKCSKEEAVKLAALVYRVRFGESKQELQAIPQMLRELVPSDLIKLQTTNDWKRSIVAAYNQDAGMSPEDAKVTFLKIVYRWPTFGSAFFEVKQTTEPNYPEMLLIAINKHGVSLIHPSSKDILVTHPFTRISNWSSGNTYFHMTIGNLVRGSKLLCETSLGYKMDDLLTSYISLMLTNMNKQRTIRIK</sequence>
<reference evidence="12" key="1">
    <citation type="journal article" date="2007" name="Science">
        <title>Genome sequence of Aedes aegypti, a major arbovirus vector.</title>
        <authorList>
            <person name="Nene V."/>
            <person name="Wortman J.R."/>
            <person name="Lawson D."/>
            <person name="Haas B.J."/>
            <person name="Kodira C.D."/>
            <person name="Tu Z.J."/>
            <person name="Loftus B.J."/>
            <person name="Xi Z."/>
            <person name="Megy K."/>
            <person name="Grabherr M."/>
            <person name="Ren Q."/>
            <person name="Zdobnov E.M."/>
            <person name="Lobo N.F."/>
            <person name="Campbell K.S."/>
            <person name="Brown S.E."/>
            <person name="Bonaldo M.F."/>
            <person name="Zhu J."/>
            <person name="Sinkins S.P."/>
            <person name="Hogenkamp D.G."/>
            <person name="Amedeo P."/>
            <person name="Arensburger P."/>
            <person name="Atkinson P.W."/>
            <person name="Bidwell S.L."/>
            <person name="Biedler J."/>
            <person name="Birney E."/>
            <person name="Bruggner R.V."/>
            <person name="Costas J."/>
            <person name="Coy M.R."/>
            <person name="Crabtree J."/>
            <person name="Crawford M."/>
            <person name="DeBruyn B."/>
            <person name="DeCaprio D."/>
            <person name="Eiglmeier K."/>
            <person name="Eisenstadt E."/>
            <person name="El-Dorry H."/>
            <person name="Gelbart W.M."/>
            <person name="Gomes S.L."/>
            <person name="Hammond M."/>
            <person name="Hannick L.I."/>
            <person name="Hogan J.R."/>
            <person name="Holmes M.H."/>
            <person name="Jaffe D."/>
            <person name="Johnston S.J."/>
            <person name="Kennedy R.C."/>
            <person name="Koo H."/>
            <person name="Kravitz S."/>
            <person name="Kriventseva E.V."/>
            <person name="Kulp D."/>
            <person name="Labutti K."/>
            <person name="Lee E."/>
            <person name="Li S."/>
            <person name="Lovin D.D."/>
            <person name="Mao C."/>
            <person name="Mauceli E."/>
            <person name="Menck C.F."/>
            <person name="Miller J.R."/>
            <person name="Montgomery P."/>
            <person name="Mori A."/>
            <person name="Nascimento A.L."/>
            <person name="Naveira H.F."/>
            <person name="Nusbaum C."/>
            <person name="O'Leary S.B."/>
            <person name="Orvis J."/>
            <person name="Pertea M."/>
            <person name="Quesneville H."/>
            <person name="Reidenbach K.R."/>
            <person name="Rogers Y.-H.C."/>
            <person name="Roth C.W."/>
            <person name="Schneider J.R."/>
            <person name="Schatz M."/>
            <person name="Shumway M."/>
            <person name="Stanke M."/>
            <person name="Stinson E.O."/>
            <person name="Tubio J.M.C."/>
            <person name="Vanzee J.P."/>
            <person name="Verjovski-Almeida S."/>
            <person name="Werner D."/>
            <person name="White O.R."/>
            <person name="Wyder S."/>
            <person name="Zeng Q."/>
            <person name="Zhao Q."/>
            <person name="Zhao Y."/>
            <person name="Hill C.A."/>
            <person name="Raikhel A.S."/>
            <person name="Soares M.B."/>
            <person name="Knudson D.L."/>
            <person name="Lee N.H."/>
            <person name="Galagan J."/>
            <person name="Salzberg S.L."/>
            <person name="Paulsen I.T."/>
            <person name="Dimopoulos G."/>
            <person name="Collins F.H."/>
            <person name="Bruce B."/>
            <person name="Fraser-Liggett C.M."/>
            <person name="Severson D.W."/>
        </authorList>
    </citation>
    <scope>NUCLEOTIDE SEQUENCE [LARGE SCALE GENOMIC DNA]</scope>
    <source>
        <strain>LVPib12</strain>
    </source>
</reference>
<organism>
    <name type="scientific">Aedes aegypti</name>
    <name type="common">Yellowfever mosquito</name>
    <name type="synonym">Culex aegypti</name>
    <dbReference type="NCBI Taxonomy" id="7159"/>
    <lineage>
        <taxon>Eukaryota</taxon>
        <taxon>Metazoa</taxon>
        <taxon>Ecdysozoa</taxon>
        <taxon>Arthropoda</taxon>
        <taxon>Hexapoda</taxon>
        <taxon>Insecta</taxon>
        <taxon>Pterygota</taxon>
        <taxon>Neoptera</taxon>
        <taxon>Endopterygota</taxon>
        <taxon>Diptera</taxon>
        <taxon>Nematocera</taxon>
        <taxon>Culicoidea</taxon>
        <taxon>Culicidae</taxon>
        <taxon>Culicinae</taxon>
        <taxon>Aedini</taxon>
        <taxon>Aedes</taxon>
        <taxon>Stegomyia</taxon>
    </lineage>
</organism>
<keyword id="KW-0009">Actin-binding</keyword>
<keyword id="KW-0067">ATP-binding</keyword>
<keyword id="KW-0175">Coiled coil</keyword>
<keyword id="KW-0963">Cytoplasm</keyword>
<keyword id="KW-0505">Motor protein</keyword>
<keyword id="KW-0518">Myosin</keyword>
<keyword id="KW-0547">Nucleotide-binding</keyword>
<keyword id="KW-1185">Reference proteome</keyword>
<keyword id="KW-0677">Repeat</keyword>
<keyword id="KW-0728">SH3 domain</keyword>
<dbReference type="EMBL" id="CH477210">
    <property type="protein sequence ID" value="EAT47711.1"/>
    <property type="molecule type" value="Genomic_DNA"/>
</dbReference>
<dbReference type="RefSeq" id="XP_001658316.1">
    <property type="nucleotide sequence ID" value="XM_001658266.1"/>
</dbReference>
<dbReference type="SMR" id="Q17LW0"/>
<dbReference type="FunCoup" id="Q17LW0">
    <property type="interactions" value="233"/>
</dbReference>
<dbReference type="STRING" id="7159.Q17LW0"/>
<dbReference type="PaxDb" id="7159-AAEL001220-PA"/>
<dbReference type="VEuPathDB" id="VectorBase:AAEL001220"/>
<dbReference type="eggNOG" id="KOG4229">
    <property type="taxonomic scope" value="Eukaryota"/>
</dbReference>
<dbReference type="HOGENOM" id="CLU_000192_14_1_1"/>
<dbReference type="InParanoid" id="Q17LW0"/>
<dbReference type="OMA" id="TGFQGRC"/>
<dbReference type="OrthoDB" id="6108017at2759"/>
<dbReference type="PhylomeDB" id="Q17LW0"/>
<dbReference type="Proteomes" id="UP000008820">
    <property type="component" value="Chromosome 2"/>
</dbReference>
<dbReference type="Proteomes" id="UP000682892">
    <property type="component" value="Unassembled WGS sequence"/>
</dbReference>
<dbReference type="GO" id="GO:0071944">
    <property type="term" value="C:cell periphery"/>
    <property type="evidence" value="ECO:0007669"/>
    <property type="project" value="UniProtKB-ARBA"/>
</dbReference>
<dbReference type="GO" id="GO:0005737">
    <property type="term" value="C:cytoplasm"/>
    <property type="evidence" value="ECO:0000250"/>
    <property type="project" value="UniProtKB"/>
</dbReference>
<dbReference type="GO" id="GO:0016459">
    <property type="term" value="C:myosin complex"/>
    <property type="evidence" value="ECO:0007669"/>
    <property type="project" value="UniProtKB-KW"/>
</dbReference>
<dbReference type="GO" id="GO:0120025">
    <property type="term" value="C:plasma membrane bounded cell projection"/>
    <property type="evidence" value="ECO:0007669"/>
    <property type="project" value="UniProtKB-ARBA"/>
</dbReference>
<dbReference type="GO" id="GO:0003779">
    <property type="term" value="F:actin binding"/>
    <property type="evidence" value="ECO:0007669"/>
    <property type="project" value="UniProtKB-KW"/>
</dbReference>
<dbReference type="GO" id="GO:0005524">
    <property type="term" value="F:ATP binding"/>
    <property type="evidence" value="ECO:0000250"/>
    <property type="project" value="UniProtKB"/>
</dbReference>
<dbReference type="GO" id="GO:0000146">
    <property type="term" value="F:microfilament motor activity"/>
    <property type="evidence" value="ECO:0000250"/>
    <property type="project" value="UniProtKB"/>
</dbReference>
<dbReference type="GO" id="GO:0032027">
    <property type="term" value="F:myosin light chain binding"/>
    <property type="evidence" value="ECO:0000250"/>
    <property type="project" value="UniProtKB"/>
</dbReference>
<dbReference type="GO" id="GO:0030048">
    <property type="term" value="P:actin filament-based movement"/>
    <property type="evidence" value="ECO:0000250"/>
    <property type="project" value="UniProtKB"/>
</dbReference>
<dbReference type="GO" id="GO:0048800">
    <property type="term" value="P:antennal morphogenesis"/>
    <property type="evidence" value="ECO:0000250"/>
    <property type="project" value="UniProtKB"/>
</dbReference>
<dbReference type="GO" id="GO:0008407">
    <property type="term" value="P:chaeta morphogenesis"/>
    <property type="evidence" value="ECO:0000250"/>
    <property type="project" value="UniProtKB"/>
</dbReference>
<dbReference type="GO" id="GO:0035317">
    <property type="term" value="P:imaginal disc-derived wing hair organization"/>
    <property type="evidence" value="ECO:0000250"/>
    <property type="project" value="UniProtKB"/>
</dbReference>
<dbReference type="GO" id="GO:0007605">
    <property type="term" value="P:sensory perception of sound"/>
    <property type="evidence" value="ECO:0000250"/>
    <property type="project" value="UniProtKB"/>
</dbReference>
<dbReference type="CDD" id="cd17092">
    <property type="entry name" value="FERM1_F1_Myosin-VII"/>
    <property type="match status" value="1"/>
</dbReference>
<dbReference type="CDD" id="cd17093">
    <property type="entry name" value="FERM2_F1_Myosin-VII"/>
    <property type="match status" value="1"/>
</dbReference>
<dbReference type="CDD" id="cd14473">
    <property type="entry name" value="FERM_B-lobe"/>
    <property type="match status" value="2"/>
</dbReference>
<dbReference type="CDD" id="cd13198">
    <property type="entry name" value="FERM_C1_MyoVII"/>
    <property type="match status" value="1"/>
</dbReference>
<dbReference type="CDD" id="cd13199">
    <property type="entry name" value="FERM_C2_MyoVII"/>
    <property type="match status" value="1"/>
</dbReference>
<dbReference type="CDD" id="cd23767">
    <property type="entry name" value="IQCD"/>
    <property type="match status" value="1"/>
</dbReference>
<dbReference type="CDD" id="cd01381">
    <property type="entry name" value="MYSc_Myo7"/>
    <property type="match status" value="1"/>
</dbReference>
<dbReference type="FunFam" id="1.10.10.820:FF:000001">
    <property type="entry name" value="Myosin heavy chain"/>
    <property type="match status" value="1"/>
</dbReference>
<dbReference type="FunFam" id="1.20.80.10:FF:000012">
    <property type="entry name" value="Myosin VIIA"/>
    <property type="match status" value="1"/>
</dbReference>
<dbReference type="FunFam" id="1.25.40.530:FF:000004">
    <property type="entry name" value="Myosin VIIA"/>
    <property type="match status" value="1"/>
</dbReference>
<dbReference type="FunFam" id="1.20.5.190:FF:000047">
    <property type="entry name" value="Myosin-VIIa"/>
    <property type="match status" value="1"/>
</dbReference>
<dbReference type="FunFam" id="1.20.120.720:FF:000019">
    <property type="entry name" value="myosin-VIIa isoform X2"/>
    <property type="match status" value="1"/>
</dbReference>
<dbReference type="FunFam" id="1.20.80.10:FF:000013">
    <property type="entry name" value="Unconventional myosin-VIIa"/>
    <property type="match status" value="1"/>
</dbReference>
<dbReference type="FunFam" id="3.10.20.90:FF:000036">
    <property type="entry name" value="Unconventional myosin-VIIa"/>
    <property type="match status" value="1"/>
</dbReference>
<dbReference type="FunFam" id="3.10.20.90:FF:000051">
    <property type="entry name" value="Unconventional myosin-VIIa"/>
    <property type="match status" value="1"/>
</dbReference>
<dbReference type="FunFam" id="2.30.29.30:FF:000075">
    <property type="entry name" value="unconventional myosin-VIIa"/>
    <property type="match status" value="1"/>
</dbReference>
<dbReference type="FunFam" id="2.30.29.30:FF:000079">
    <property type="entry name" value="unconventional myosin-VIIa"/>
    <property type="match status" value="1"/>
</dbReference>
<dbReference type="Gene3D" id="1.10.10.820">
    <property type="match status" value="1"/>
</dbReference>
<dbReference type="Gene3D" id="1.20.5.190">
    <property type="match status" value="2"/>
</dbReference>
<dbReference type="Gene3D" id="1.20.58.530">
    <property type="match status" value="1"/>
</dbReference>
<dbReference type="Gene3D" id="1.20.80.10">
    <property type="match status" value="2"/>
</dbReference>
<dbReference type="Gene3D" id="6.20.240.20">
    <property type="match status" value="1"/>
</dbReference>
<dbReference type="Gene3D" id="3.40.850.10">
    <property type="entry name" value="Kinesin motor domain"/>
    <property type="match status" value="1"/>
</dbReference>
<dbReference type="Gene3D" id="1.20.120.720">
    <property type="entry name" value="Myosin VI head, motor domain, U50 subdomain"/>
    <property type="match status" value="1"/>
</dbReference>
<dbReference type="Gene3D" id="1.25.40.530">
    <property type="entry name" value="MyTH4 domain"/>
    <property type="match status" value="2"/>
</dbReference>
<dbReference type="Gene3D" id="3.10.20.90">
    <property type="entry name" value="Phosphatidylinositol 3-kinase Catalytic Subunit, Chain A, domain 1"/>
    <property type="match status" value="2"/>
</dbReference>
<dbReference type="Gene3D" id="2.30.29.30">
    <property type="entry name" value="Pleckstrin-homology domain (PH domain)/Phosphotyrosine-binding domain (PTB)"/>
    <property type="match status" value="2"/>
</dbReference>
<dbReference type="Gene3D" id="2.30.30.40">
    <property type="entry name" value="SH3 Domains"/>
    <property type="match status" value="1"/>
</dbReference>
<dbReference type="InterPro" id="IPR019749">
    <property type="entry name" value="Band_41_domain"/>
</dbReference>
<dbReference type="InterPro" id="IPR014352">
    <property type="entry name" value="FERM/acyl-CoA-bd_prot_sf"/>
</dbReference>
<dbReference type="InterPro" id="IPR035963">
    <property type="entry name" value="FERM_2"/>
</dbReference>
<dbReference type="InterPro" id="IPR019748">
    <property type="entry name" value="FERM_central"/>
</dbReference>
<dbReference type="InterPro" id="IPR000299">
    <property type="entry name" value="FERM_domain"/>
</dbReference>
<dbReference type="InterPro" id="IPR000048">
    <property type="entry name" value="IQ_motif_EF-hand-BS"/>
</dbReference>
<dbReference type="InterPro" id="IPR002404">
    <property type="entry name" value="IRS_PTB"/>
</dbReference>
<dbReference type="InterPro" id="IPR036961">
    <property type="entry name" value="Kinesin_motor_dom_sf"/>
</dbReference>
<dbReference type="InterPro" id="IPR001609">
    <property type="entry name" value="Myosin_head_motor_dom-like"/>
</dbReference>
<dbReference type="InterPro" id="IPR041793">
    <property type="entry name" value="MyoVII_FERM_C1"/>
</dbReference>
<dbReference type="InterPro" id="IPR041794">
    <property type="entry name" value="MyoVII_FERM_C2"/>
</dbReference>
<dbReference type="InterPro" id="IPR036106">
    <property type="entry name" value="MYSc_Myo7"/>
</dbReference>
<dbReference type="InterPro" id="IPR000857">
    <property type="entry name" value="MyTH4_dom"/>
</dbReference>
<dbReference type="InterPro" id="IPR038185">
    <property type="entry name" value="MyTH4_dom_sf"/>
</dbReference>
<dbReference type="InterPro" id="IPR027417">
    <property type="entry name" value="P-loop_NTPase"/>
</dbReference>
<dbReference type="InterPro" id="IPR011993">
    <property type="entry name" value="PH-like_dom_sf"/>
</dbReference>
<dbReference type="InterPro" id="IPR036028">
    <property type="entry name" value="SH3-like_dom_sf"/>
</dbReference>
<dbReference type="InterPro" id="IPR001452">
    <property type="entry name" value="SH3_domain"/>
</dbReference>
<dbReference type="InterPro" id="IPR029071">
    <property type="entry name" value="Ubiquitin-like_domsf"/>
</dbReference>
<dbReference type="InterPro" id="IPR051567">
    <property type="entry name" value="Unconventional_Myosin_ATPase"/>
</dbReference>
<dbReference type="PANTHER" id="PTHR22692:SF33">
    <property type="entry name" value="MYOSIN"/>
    <property type="match status" value="1"/>
</dbReference>
<dbReference type="PANTHER" id="PTHR22692">
    <property type="entry name" value="MYOSIN VII, XV"/>
    <property type="match status" value="1"/>
</dbReference>
<dbReference type="Pfam" id="PF21998">
    <property type="entry name" value="FERM_C1_MyoVII"/>
    <property type="match status" value="1"/>
</dbReference>
<dbReference type="Pfam" id="PF00373">
    <property type="entry name" value="FERM_M"/>
    <property type="match status" value="2"/>
</dbReference>
<dbReference type="Pfam" id="PF00612">
    <property type="entry name" value="IQ"/>
    <property type="match status" value="4"/>
</dbReference>
<dbReference type="Pfam" id="PF02174">
    <property type="entry name" value="IRS"/>
    <property type="match status" value="1"/>
</dbReference>
<dbReference type="Pfam" id="PF00063">
    <property type="entry name" value="Myosin_head"/>
    <property type="match status" value="1"/>
</dbReference>
<dbReference type="Pfam" id="PF24123">
    <property type="entry name" value="Myosin_VII_N"/>
    <property type="match status" value="1"/>
</dbReference>
<dbReference type="Pfam" id="PF00784">
    <property type="entry name" value="MyTH4"/>
    <property type="match status" value="2"/>
</dbReference>
<dbReference type="Pfam" id="PF21989">
    <property type="entry name" value="RA_2"/>
    <property type="match status" value="2"/>
</dbReference>
<dbReference type="PRINTS" id="PR00193">
    <property type="entry name" value="MYOSINHEAVY"/>
</dbReference>
<dbReference type="SMART" id="SM00295">
    <property type="entry name" value="B41"/>
    <property type="match status" value="2"/>
</dbReference>
<dbReference type="SMART" id="SM00015">
    <property type="entry name" value="IQ"/>
    <property type="match status" value="4"/>
</dbReference>
<dbReference type="SMART" id="SM00242">
    <property type="entry name" value="MYSc"/>
    <property type="match status" value="1"/>
</dbReference>
<dbReference type="SMART" id="SM00139">
    <property type="entry name" value="MyTH4"/>
    <property type="match status" value="2"/>
</dbReference>
<dbReference type="SMART" id="SM00326">
    <property type="entry name" value="SH3"/>
    <property type="match status" value="1"/>
</dbReference>
<dbReference type="SUPFAM" id="SSF52540">
    <property type="entry name" value="P-loop containing nucleoside triphosphate hydrolases"/>
    <property type="match status" value="2"/>
</dbReference>
<dbReference type="SUPFAM" id="SSF50729">
    <property type="entry name" value="PH domain-like"/>
    <property type="match status" value="1"/>
</dbReference>
<dbReference type="SUPFAM" id="SSF47031">
    <property type="entry name" value="Second domain of FERM"/>
    <property type="match status" value="2"/>
</dbReference>
<dbReference type="SUPFAM" id="SSF50044">
    <property type="entry name" value="SH3-domain"/>
    <property type="match status" value="1"/>
</dbReference>
<dbReference type="SUPFAM" id="SSF54236">
    <property type="entry name" value="Ubiquitin-like"/>
    <property type="match status" value="2"/>
</dbReference>
<dbReference type="PROSITE" id="PS50057">
    <property type="entry name" value="FERM_3"/>
    <property type="match status" value="2"/>
</dbReference>
<dbReference type="PROSITE" id="PS50096">
    <property type="entry name" value="IQ"/>
    <property type="match status" value="4"/>
</dbReference>
<dbReference type="PROSITE" id="PS51456">
    <property type="entry name" value="MYOSIN_MOTOR"/>
    <property type="match status" value="1"/>
</dbReference>
<dbReference type="PROSITE" id="PS51016">
    <property type="entry name" value="MYTH4"/>
    <property type="match status" value="2"/>
</dbReference>
<dbReference type="PROSITE" id="PS50002">
    <property type="entry name" value="SH3"/>
    <property type="match status" value="1"/>
</dbReference>
<accession>Q17LW0</accession>